<keyword id="KW-0249">Electron transport</keyword>
<keyword id="KW-0349">Heme</keyword>
<keyword id="KW-0408">Iron</keyword>
<keyword id="KW-0472">Membrane</keyword>
<keyword id="KW-0479">Metal-binding</keyword>
<keyword id="KW-0496">Mitochondrion</keyword>
<keyword id="KW-0999">Mitochondrion inner membrane</keyword>
<keyword id="KW-0679">Respiratory chain</keyword>
<keyword id="KW-0812">Transmembrane</keyword>
<keyword id="KW-1133">Transmembrane helix</keyword>
<keyword id="KW-0813">Transport</keyword>
<keyword id="KW-0830">Ubiquinone</keyword>
<name>CYB_CAPSI</name>
<feature type="chain" id="PRO_0000060730" description="Cytochrome b">
    <location>
        <begin position="1"/>
        <end position="380"/>
    </location>
</feature>
<feature type="transmembrane region" description="Helical" evidence="2">
    <location>
        <begin position="33"/>
        <end position="53"/>
    </location>
</feature>
<feature type="transmembrane region" description="Helical" evidence="2">
    <location>
        <begin position="77"/>
        <end position="98"/>
    </location>
</feature>
<feature type="transmembrane region" description="Helical" evidence="2">
    <location>
        <begin position="113"/>
        <end position="133"/>
    </location>
</feature>
<feature type="transmembrane region" description="Helical" evidence="2">
    <location>
        <begin position="178"/>
        <end position="198"/>
    </location>
</feature>
<feature type="transmembrane region" description="Helical" evidence="2">
    <location>
        <begin position="226"/>
        <end position="246"/>
    </location>
</feature>
<feature type="transmembrane region" description="Helical" evidence="2">
    <location>
        <begin position="288"/>
        <end position="308"/>
    </location>
</feature>
<feature type="transmembrane region" description="Helical" evidence="2">
    <location>
        <begin position="320"/>
        <end position="340"/>
    </location>
</feature>
<feature type="transmembrane region" description="Helical" evidence="2">
    <location>
        <begin position="347"/>
        <end position="367"/>
    </location>
</feature>
<feature type="binding site" description="axial binding residue" evidence="2">
    <location>
        <position position="83"/>
    </location>
    <ligand>
        <name>heme b</name>
        <dbReference type="ChEBI" id="CHEBI:60344"/>
        <label>b562</label>
    </ligand>
    <ligandPart>
        <name>Fe</name>
        <dbReference type="ChEBI" id="CHEBI:18248"/>
    </ligandPart>
</feature>
<feature type="binding site" description="axial binding residue" evidence="2">
    <location>
        <position position="97"/>
    </location>
    <ligand>
        <name>heme b</name>
        <dbReference type="ChEBI" id="CHEBI:60344"/>
        <label>b566</label>
    </ligand>
    <ligandPart>
        <name>Fe</name>
        <dbReference type="ChEBI" id="CHEBI:18248"/>
    </ligandPart>
</feature>
<feature type="binding site" description="axial binding residue" evidence="2">
    <location>
        <position position="182"/>
    </location>
    <ligand>
        <name>heme b</name>
        <dbReference type="ChEBI" id="CHEBI:60344"/>
        <label>b562</label>
    </ligand>
    <ligandPart>
        <name>Fe</name>
        <dbReference type="ChEBI" id="CHEBI:18248"/>
    </ligandPart>
</feature>
<feature type="binding site" description="axial binding residue" evidence="2">
    <location>
        <position position="196"/>
    </location>
    <ligand>
        <name>heme b</name>
        <dbReference type="ChEBI" id="CHEBI:60344"/>
        <label>b566</label>
    </ligand>
    <ligandPart>
        <name>Fe</name>
        <dbReference type="ChEBI" id="CHEBI:18248"/>
    </ligandPart>
</feature>
<feature type="binding site" evidence="2">
    <location>
        <position position="201"/>
    </location>
    <ligand>
        <name>a ubiquinone</name>
        <dbReference type="ChEBI" id="CHEBI:16389"/>
    </ligand>
</feature>
<accession>O78784</accession>
<gene>
    <name type="primary">MT-CYB</name>
    <name type="synonym">COB</name>
    <name type="synonym">CYTB</name>
    <name type="synonym">MTCYB</name>
</gene>
<evidence type="ECO:0000250" key="1"/>
<evidence type="ECO:0000250" key="2">
    <source>
        <dbReference type="UniProtKB" id="P00157"/>
    </source>
</evidence>
<evidence type="ECO:0000255" key="3">
    <source>
        <dbReference type="PROSITE-ProRule" id="PRU00967"/>
    </source>
</evidence>
<evidence type="ECO:0000255" key="4">
    <source>
        <dbReference type="PROSITE-ProRule" id="PRU00968"/>
    </source>
</evidence>
<reference key="1">
    <citation type="journal article" date="1998" name="J. Mammal. Evol.">
        <title>Molecular systematics of the subfamily Caprinae (Artiodactyla, Bovidae) as determined from cytochrome b sequences.</title>
        <authorList>
            <person name="Hassanin A."/>
            <person name="Pasquet E."/>
            <person name="Vigne J.-D."/>
        </authorList>
    </citation>
    <scope>NUCLEOTIDE SEQUENCE [GENOMIC DNA]</scope>
</reference>
<sequence>MTNIRKTHPLMKIVNNTFIDLPTPSNISSWWNFGSLLGICLILQILTGLFLAMHYTSDTTTAFSSVTHICRDVNYGWIIRYMHANGASMFFICLFMHIGRGLYYGSYTFLETWNIGVLLLFTTMATAFMGYVLPWGQMSFWGATVITNLLSAIPYIGTSLVEWIWGGFSVDKATLTRFFAFHFILPFIIMALAMVHLLFLHETGSNNPTGIPSNTDKIPFHPYYTIKDILGATLLILALMLLVLFMPDLLGDPDNYTPANPLNTPPHIKPEWYFLFAYAILRSIPNKLGGVLALALSILILVLVPFLHTSKQRSMMFRPISQCMFWVLVADLLTLTWIGGQPVEHPYVIIGQLASIMYFLIILVIMPTASIIENNLLKWK</sequence>
<organism>
    <name type="scientific">Capra sibirica</name>
    <name type="common">Siberian ibex</name>
    <name type="synonym">Capra ibex sibirica</name>
    <dbReference type="NCBI Taxonomy" id="72544"/>
    <lineage>
        <taxon>Eukaryota</taxon>
        <taxon>Metazoa</taxon>
        <taxon>Chordata</taxon>
        <taxon>Craniata</taxon>
        <taxon>Vertebrata</taxon>
        <taxon>Euteleostomi</taxon>
        <taxon>Mammalia</taxon>
        <taxon>Eutheria</taxon>
        <taxon>Laurasiatheria</taxon>
        <taxon>Artiodactyla</taxon>
        <taxon>Ruminantia</taxon>
        <taxon>Pecora</taxon>
        <taxon>Bovidae</taxon>
        <taxon>Caprinae</taxon>
        <taxon>Capra</taxon>
    </lineage>
</organism>
<protein>
    <recommendedName>
        <fullName>Cytochrome b</fullName>
    </recommendedName>
    <alternativeName>
        <fullName>Complex III subunit 3</fullName>
    </alternativeName>
    <alternativeName>
        <fullName>Complex III subunit III</fullName>
    </alternativeName>
    <alternativeName>
        <fullName>Cytochrome b-c1 complex subunit 3</fullName>
    </alternativeName>
    <alternativeName>
        <fullName>Ubiquinol-cytochrome-c reductase complex cytochrome b subunit</fullName>
    </alternativeName>
</protein>
<dbReference type="EMBL" id="AF034734">
    <property type="protein sequence ID" value="AAC31689.1"/>
    <property type="molecule type" value="Genomic_DNA"/>
</dbReference>
<dbReference type="SMR" id="O78784"/>
<dbReference type="GO" id="GO:0005743">
    <property type="term" value="C:mitochondrial inner membrane"/>
    <property type="evidence" value="ECO:0007669"/>
    <property type="project" value="UniProtKB-SubCell"/>
</dbReference>
<dbReference type="GO" id="GO:0045275">
    <property type="term" value="C:respiratory chain complex III"/>
    <property type="evidence" value="ECO:0007669"/>
    <property type="project" value="InterPro"/>
</dbReference>
<dbReference type="GO" id="GO:0046872">
    <property type="term" value="F:metal ion binding"/>
    <property type="evidence" value="ECO:0007669"/>
    <property type="project" value="UniProtKB-KW"/>
</dbReference>
<dbReference type="GO" id="GO:0008121">
    <property type="term" value="F:ubiquinol-cytochrome-c reductase activity"/>
    <property type="evidence" value="ECO:0007669"/>
    <property type="project" value="InterPro"/>
</dbReference>
<dbReference type="GO" id="GO:0006122">
    <property type="term" value="P:mitochondrial electron transport, ubiquinol to cytochrome c"/>
    <property type="evidence" value="ECO:0007669"/>
    <property type="project" value="TreeGrafter"/>
</dbReference>
<dbReference type="CDD" id="cd00290">
    <property type="entry name" value="cytochrome_b_C"/>
    <property type="match status" value="1"/>
</dbReference>
<dbReference type="CDD" id="cd00284">
    <property type="entry name" value="Cytochrome_b_N"/>
    <property type="match status" value="1"/>
</dbReference>
<dbReference type="FunFam" id="1.20.810.10:FF:000002">
    <property type="entry name" value="Cytochrome b"/>
    <property type="match status" value="1"/>
</dbReference>
<dbReference type="Gene3D" id="1.20.810.10">
    <property type="entry name" value="Cytochrome Bc1 Complex, Chain C"/>
    <property type="match status" value="1"/>
</dbReference>
<dbReference type="InterPro" id="IPR005798">
    <property type="entry name" value="Cyt_b/b6_C"/>
</dbReference>
<dbReference type="InterPro" id="IPR036150">
    <property type="entry name" value="Cyt_b/b6_C_sf"/>
</dbReference>
<dbReference type="InterPro" id="IPR005797">
    <property type="entry name" value="Cyt_b/b6_N"/>
</dbReference>
<dbReference type="InterPro" id="IPR027387">
    <property type="entry name" value="Cytb/b6-like_sf"/>
</dbReference>
<dbReference type="InterPro" id="IPR030689">
    <property type="entry name" value="Cytochrome_b"/>
</dbReference>
<dbReference type="InterPro" id="IPR048260">
    <property type="entry name" value="Cytochrome_b_C_euk/bac"/>
</dbReference>
<dbReference type="InterPro" id="IPR048259">
    <property type="entry name" value="Cytochrome_b_N_euk/bac"/>
</dbReference>
<dbReference type="InterPro" id="IPR016174">
    <property type="entry name" value="Di-haem_cyt_TM"/>
</dbReference>
<dbReference type="PANTHER" id="PTHR19271">
    <property type="entry name" value="CYTOCHROME B"/>
    <property type="match status" value="1"/>
</dbReference>
<dbReference type="PANTHER" id="PTHR19271:SF16">
    <property type="entry name" value="CYTOCHROME B"/>
    <property type="match status" value="1"/>
</dbReference>
<dbReference type="Pfam" id="PF00032">
    <property type="entry name" value="Cytochrom_B_C"/>
    <property type="match status" value="1"/>
</dbReference>
<dbReference type="Pfam" id="PF00033">
    <property type="entry name" value="Cytochrome_B"/>
    <property type="match status" value="1"/>
</dbReference>
<dbReference type="PIRSF" id="PIRSF038885">
    <property type="entry name" value="COB"/>
    <property type="match status" value="1"/>
</dbReference>
<dbReference type="SUPFAM" id="SSF81648">
    <property type="entry name" value="a domain/subunit of cytochrome bc1 complex (Ubiquinol-cytochrome c reductase)"/>
    <property type="match status" value="1"/>
</dbReference>
<dbReference type="SUPFAM" id="SSF81342">
    <property type="entry name" value="Transmembrane di-heme cytochromes"/>
    <property type="match status" value="1"/>
</dbReference>
<dbReference type="PROSITE" id="PS51003">
    <property type="entry name" value="CYTB_CTER"/>
    <property type="match status" value="1"/>
</dbReference>
<dbReference type="PROSITE" id="PS51002">
    <property type="entry name" value="CYTB_NTER"/>
    <property type="match status" value="1"/>
</dbReference>
<geneLocation type="mitochondrion"/>
<comment type="function">
    <text evidence="2">Component of the ubiquinol-cytochrome c reductase complex (complex III or cytochrome b-c1 complex) that is part of the mitochondrial respiratory chain. The b-c1 complex mediates electron transfer from ubiquinol to cytochrome c. Contributes to the generation of a proton gradient across the mitochondrial membrane that is then used for ATP synthesis.</text>
</comment>
<comment type="cofactor">
    <cofactor evidence="2">
        <name>heme b</name>
        <dbReference type="ChEBI" id="CHEBI:60344"/>
    </cofactor>
    <text evidence="2">Binds 2 heme b groups non-covalently.</text>
</comment>
<comment type="subunit">
    <text evidence="2">The cytochrome bc1 complex contains 11 subunits: 3 respiratory subunits (MT-CYB, CYC1 and UQCRFS1), 2 core proteins (UQCRC1 and UQCRC2) and 6 low-molecular weight proteins (UQCRH/QCR6, UQCRB/QCR7, UQCRQ/QCR8, UQCR10/QCR9, UQCR11/QCR10 and a cleavage product of UQCRFS1). This cytochrome bc1 complex then forms a dimer.</text>
</comment>
<comment type="subcellular location">
    <subcellularLocation>
        <location evidence="2">Mitochondrion inner membrane</location>
        <topology evidence="2">Multi-pass membrane protein</topology>
    </subcellularLocation>
</comment>
<comment type="miscellaneous">
    <text evidence="1">Heme 1 (or BL or b562) is low-potential and absorbs at about 562 nm, and heme 2 (or BH or b566) is high-potential and absorbs at about 566 nm.</text>
</comment>
<comment type="similarity">
    <text evidence="3 4">Belongs to the cytochrome b family.</text>
</comment>
<comment type="caution">
    <text evidence="2">The full-length protein contains only eight transmembrane helices, not nine as predicted by bioinformatics tools.</text>
</comment>
<proteinExistence type="inferred from homology"/>